<accession>Q71QH9</accession>
<organism>
    <name type="scientific">Trimeresurus stejnegeri</name>
    <name type="common">Chinese green tree viper</name>
    <name type="synonym">Viridovipera stejnegeri</name>
    <dbReference type="NCBI Taxonomy" id="39682"/>
    <lineage>
        <taxon>Eukaryota</taxon>
        <taxon>Metazoa</taxon>
        <taxon>Chordata</taxon>
        <taxon>Craniata</taxon>
        <taxon>Vertebrata</taxon>
        <taxon>Euteleostomi</taxon>
        <taxon>Lepidosauria</taxon>
        <taxon>Squamata</taxon>
        <taxon>Bifurcata</taxon>
        <taxon>Unidentata</taxon>
        <taxon>Episquamata</taxon>
        <taxon>Toxicofera</taxon>
        <taxon>Serpentes</taxon>
        <taxon>Colubroidea</taxon>
        <taxon>Viperidae</taxon>
        <taxon>Crotalinae</taxon>
        <taxon>Trimeresurus</taxon>
    </lineage>
</organism>
<evidence type="ECO:0000250" key="1"/>
<evidence type="ECO:0000255" key="2"/>
<evidence type="ECO:0000255" key="3">
    <source>
        <dbReference type="PROSITE-ProRule" id="PRU00274"/>
    </source>
</evidence>
<dbReference type="EC" id="3.4.21.-"/>
<dbReference type="EMBL" id="AF395778">
    <property type="protein sequence ID" value="AAQ02908.1"/>
    <property type="molecule type" value="mRNA"/>
</dbReference>
<dbReference type="SMR" id="Q71QH9"/>
<dbReference type="MEROPS" id="S01.497"/>
<dbReference type="GO" id="GO:0005576">
    <property type="term" value="C:extracellular region"/>
    <property type="evidence" value="ECO:0007669"/>
    <property type="project" value="UniProtKB-SubCell"/>
</dbReference>
<dbReference type="GO" id="GO:0030141">
    <property type="term" value="C:secretory granule"/>
    <property type="evidence" value="ECO:0007669"/>
    <property type="project" value="TreeGrafter"/>
</dbReference>
<dbReference type="GO" id="GO:0004252">
    <property type="term" value="F:serine-type endopeptidase activity"/>
    <property type="evidence" value="ECO:0007669"/>
    <property type="project" value="InterPro"/>
</dbReference>
<dbReference type="GO" id="GO:0090729">
    <property type="term" value="F:toxin activity"/>
    <property type="evidence" value="ECO:0007669"/>
    <property type="project" value="UniProtKB-KW"/>
</dbReference>
<dbReference type="GO" id="GO:0006508">
    <property type="term" value="P:proteolysis"/>
    <property type="evidence" value="ECO:0007669"/>
    <property type="project" value="UniProtKB-KW"/>
</dbReference>
<dbReference type="CDD" id="cd00190">
    <property type="entry name" value="Tryp_SPc"/>
    <property type="match status" value="1"/>
</dbReference>
<dbReference type="FunFam" id="2.40.10.10:FF:000158">
    <property type="entry name" value="Thrombin-like enzyme saxthrombin"/>
    <property type="match status" value="1"/>
</dbReference>
<dbReference type="Gene3D" id="2.40.10.10">
    <property type="entry name" value="Trypsin-like serine proteases"/>
    <property type="match status" value="2"/>
</dbReference>
<dbReference type="InterPro" id="IPR009003">
    <property type="entry name" value="Peptidase_S1_PA"/>
</dbReference>
<dbReference type="InterPro" id="IPR043504">
    <property type="entry name" value="Peptidase_S1_PA_chymotrypsin"/>
</dbReference>
<dbReference type="InterPro" id="IPR001314">
    <property type="entry name" value="Peptidase_S1A"/>
</dbReference>
<dbReference type="InterPro" id="IPR001254">
    <property type="entry name" value="Trypsin_dom"/>
</dbReference>
<dbReference type="InterPro" id="IPR018114">
    <property type="entry name" value="TRYPSIN_HIS"/>
</dbReference>
<dbReference type="InterPro" id="IPR033116">
    <property type="entry name" value="TRYPSIN_SER"/>
</dbReference>
<dbReference type="PANTHER" id="PTHR24271:SF47">
    <property type="entry name" value="KALLIKREIN-1"/>
    <property type="match status" value="1"/>
</dbReference>
<dbReference type="PANTHER" id="PTHR24271">
    <property type="entry name" value="KALLIKREIN-RELATED"/>
    <property type="match status" value="1"/>
</dbReference>
<dbReference type="Pfam" id="PF00089">
    <property type="entry name" value="Trypsin"/>
    <property type="match status" value="1"/>
</dbReference>
<dbReference type="PRINTS" id="PR00722">
    <property type="entry name" value="CHYMOTRYPSIN"/>
</dbReference>
<dbReference type="SMART" id="SM00020">
    <property type="entry name" value="Tryp_SPc"/>
    <property type="match status" value="1"/>
</dbReference>
<dbReference type="SUPFAM" id="SSF50494">
    <property type="entry name" value="Trypsin-like serine proteases"/>
    <property type="match status" value="1"/>
</dbReference>
<dbReference type="PROSITE" id="PS50240">
    <property type="entry name" value="TRYPSIN_DOM"/>
    <property type="match status" value="1"/>
</dbReference>
<dbReference type="PROSITE" id="PS00134">
    <property type="entry name" value="TRYPSIN_HIS"/>
    <property type="match status" value="1"/>
</dbReference>
<dbReference type="PROSITE" id="PS00135">
    <property type="entry name" value="TRYPSIN_SER"/>
    <property type="match status" value="1"/>
</dbReference>
<sequence length="260" mass="28512">MVLIRVLANLLILQLSYAQKSSELVIGGDECNINEHRFLVALYDVSSGDFRGSGTLINPEWVLTAAHCETEEMKLQFGLHSKRVPNKDKQTRVSKEKFFCESNENYTKWNKDIMLIKLNRPVKNSAHIEPLSLPSSPPSVGSVCRIMGWGTLSDTEMILPDVPHCANINLLNYSDCQAAYPELPAKSRTLCAGILEGGKDTCSGDSGGPLICNGTFQGIASWGGTLCGYVREPGSYTKVFDHLDWIQSIIAGNTNVTCPL</sequence>
<name>VSP14_TRIST</name>
<feature type="signal peptide" evidence="2">
    <location>
        <begin position="1"/>
        <end position="18"/>
    </location>
</feature>
<feature type="propeptide" id="PRO_0000295838" evidence="1">
    <location>
        <begin position="19"/>
        <end position="24"/>
    </location>
</feature>
<feature type="chain" id="PRO_5000061230" description="Snake venom serine protease KN14">
    <location>
        <begin position="25"/>
        <end position="260"/>
    </location>
</feature>
<feature type="domain" description="Peptidase S1" evidence="3">
    <location>
        <begin position="25"/>
        <end position="251"/>
    </location>
</feature>
<feature type="active site" description="Charge relay system" evidence="1">
    <location>
        <position position="67"/>
    </location>
</feature>
<feature type="active site" description="Charge relay system" evidence="1">
    <location>
        <position position="112"/>
    </location>
</feature>
<feature type="active site" description="Charge relay system" evidence="1">
    <location>
        <position position="206"/>
    </location>
</feature>
<feature type="glycosylation site" description="N-linked (GlcNAc...) asparagine" evidence="2">
    <location>
        <position position="105"/>
    </location>
</feature>
<feature type="glycosylation site" description="N-linked (GlcNAc...) asparagine" evidence="2">
    <location>
        <position position="172"/>
    </location>
</feature>
<feature type="glycosylation site" description="N-linked (GlcNAc...) asparagine" evidence="2">
    <location>
        <position position="213"/>
    </location>
</feature>
<feature type="glycosylation site" description="N-linked (GlcNAc...) asparagine" evidence="2">
    <location>
        <position position="255"/>
    </location>
</feature>
<feature type="disulfide bond" evidence="3">
    <location>
        <begin position="31"/>
        <end position="165"/>
    </location>
</feature>
<feature type="disulfide bond" evidence="3">
    <location>
        <begin position="100"/>
        <end position="258"/>
    </location>
</feature>
<feature type="disulfide bond" evidence="3">
    <location>
        <begin position="144"/>
        <end position="212"/>
    </location>
</feature>
<feature type="disulfide bond" evidence="3">
    <location>
        <begin position="176"/>
        <end position="191"/>
    </location>
</feature>
<feature type="disulfide bond" evidence="3">
    <location>
        <begin position="202"/>
        <end position="227"/>
    </location>
</feature>
<comment type="function">
    <text evidence="1">Snake venom serine protease that may act in the hemostasis system of the prey.</text>
</comment>
<comment type="subunit">
    <text evidence="1">Monomer.</text>
</comment>
<comment type="subcellular location">
    <subcellularLocation>
        <location evidence="1">Secreted</location>
    </subcellularLocation>
</comment>
<comment type="tissue specificity">
    <text>Expressed by the venom gland.</text>
</comment>
<comment type="similarity">
    <text evidence="3">Belongs to the peptidase S1 family. Snake venom subfamily.</text>
</comment>
<protein>
    <recommendedName>
        <fullName>Snake venom serine protease KN14</fullName>
        <shortName>SVSP</shortName>
        <ecNumber>3.4.21.-</ecNumber>
    </recommendedName>
</protein>
<keyword id="KW-1015">Disulfide bond</keyword>
<keyword id="KW-0325">Glycoprotein</keyword>
<keyword id="KW-1199">Hemostasis impairing toxin</keyword>
<keyword id="KW-0378">Hydrolase</keyword>
<keyword id="KW-0645">Protease</keyword>
<keyword id="KW-0964">Secreted</keyword>
<keyword id="KW-0720">Serine protease</keyword>
<keyword id="KW-0732">Signal</keyword>
<keyword id="KW-0800">Toxin</keyword>
<keyword id="KW-0865">Zymogen</keyword>
<reference key="1">
    <citation type="submission" date="2001-06" db="EMBL/GenBank/DDBJ databases">
        <title>Identification of geographic variations and cloning of venom proteins of Trimeresurus stejnegeri: serine proteases and phospholipases.</title>
        <authorList>
            <person name="Tsai I.-H."/>
            <person name="Wang Y.-M."/>
        </authorList>
    </citation>
    <scope>NUCLEOTIDE SEQUENCE [MRNA]</scope>
    <source>
        <tissue>Venom gland</tissue>
    </source>
</reference>
<proteinExistence type="evidence at transcript level"/>